<dbReference type="EC" id="3.6.1.66" evidence="1"/>
<dbReference type="EMBL" id="BX936398">
    <property type="protein sequence ID" value="CAH22455.1"/>
    <property type="molecule type" value="Genomic_DNA"/>
</dbReference>
<dbReference type="RefSeq" id="WP_011192977.1">
    <property type="nucleotide sequence ID" value="NC_006155.1"/>
</dbReference>
<dbReference type="SMR" id="Q666N1"/>
<dbReference type="KEGG" id="ypo:BZ17_3393"/>
<dbReference type="KEGG" id="yps:YPTB3217"/>
<dbReference type="PATRIC" id="fig|273123.14.peg.3560"/>
<dbReference type="Proteomes" id="UP000001011">
    <property type="component" value="Chromosome"/>
</dbReference>
<dbReference type="GO" id="GO:0005829">
    <property type="term" value="C:cytosol"/>
    <property type="evidence" value="ECO:0007669"/>
    <property type="project" value="TreeGrafter"/>
</dbReference>
<dbReference type="GO" id="GO:0035870">
    <property type="term" value="F:dITP diphosphatase activity"/>
    <property type="evidence" value="ECO:0007669"/>
    <property type="project" value="RHEA"/>
</dbReference>
<dbReference type="GO" id="GO:0036220">
    <property type="term" value="F:ITP diphosphatase activity"/>
    <property type="evidence" value="ECO:0007669"/>
    <property type="project" value="UniProtKB-EC"/>
</dbReference>
<dbReference type="GO" id="GO:0046872">
    <property type="term" value="F:metal ion binding"/>
    <property type="evidence" value="ECO:0007669"/>
    <property type="project" value="UniProtKB-KW"/>
</dbReference>
<dbReference type="GO" id="GO:0000166">
    <property type="term" value="F:nucleotide binding"/>
    <property type="evidence" value="ECO:0007669"/>
    <property type="project" value="UniProtKB-KW"/>
</dbReference>
<dbReference type="GO" id="GO:0017111">
    <property type="term" value="F:ribonucleoside triphosphate phosphatase activity"/>
    <property type="evidence" value="ECO:0007669"/>
    <property type="project" value="InterPro"/>
</dbReference>
<dbReference type="GO" id="GO:0036222">
    <property type="term" value="F:XTP diphosphatase activity"/>
    <property type="evidence" value="ECO:0007669"/>
    <property type="project" value="RHEA"/>
</dbReference>
<dbReference type="GO" id="GO:0009117">
    <property type="term" value="P:nucleotide metabolic process"/>
    <property type="evidence" value="ECO:0007669"/>
    <property type="project" value="UniProtKB-KW"/>
</dbReference>
<dbReference type="GO" id="GO:0009146">
    <property type="term" value="P:purine nucleoside triphosphate catabolic process"/>
    <property type="evidence" value="ECO:0007669"/>
    <property type="project" value="UniProtKB-UniRule"/>
</dbReference>
<dbReference type="CDD" id="cd00515">
    <property type="entry name" value="HAM1"/>
    <property type="match status" value="1"/>
</dbReference>
<dbReference type="FunFam" id="3.90.950.10:FF:000001">
    <property type="entry name" value="dITP/XTP pyrophosphatase"/>
    <property type="match status" value="1"/>
</dbReference>
<dbReference type="Gene3D" id="3.90.950.10">
    <property type="match status" value="1"/>
</dbReference>
<dbReference type="HAMAP" id="MF_01405">
    <property type="entry name" value="Non_canon_purine_NTPase"/>
    <property type="match status" value="1"/>
</dbReference>
<dbReference type="InterPro" id="IPR020922">
    <property type="entry name" value="dITP/XTP_pyrophosphatase"/>
</dbReference>
<dbReference type="InterPro" id="IPR029001">
    <property type="entry name" value="ITPase-like_fam"/>
</dbReference>
<dbReference type="InterPro" id="IPR002637">
    <property type="entry name" value="RdgB/HAM1"/>
</dbReference>
<dbReference type="NCBIfam" id="NF011397">
    <property type="entry name" value="PRK14822.1"/>
    <property type="match status" value="1"/>
</dbReference>
<dbReference type="NCBIfam" id="TIGR00042">
    <property type="entry name" value="RdgB/HAM1 family non-canonical purine NTP pyrophosphatase"/>
    <property type="match status" value="1"/>
</dbReference>
<dbReference type="PANTHER" id="PTHR11067:SF9">
    <property type="entry name" value="INOSINE TRIPHOSPHATE PYROPHOSPHATASE"/>
    <property type="match status" value="1"/>
</dbReference>
<dbReference type="PANTHER" id="PTHR11067">
    <property type="entry name" value="INOSINE TRIPHOSPHATE PYROPHOSPHATASE/HAM1 PROTEIN"/>
    <property type="match status" value="1"/>
</dbReference>
<dbReference type="Pfam" id="PF01725">
    <property type="entry name" value="Ham1p_like"/>
    <property type="match status" value="1"/>
</dbReference>
<dbReference type="SUPFAM" id="SSF52972">
    <property type="entry name" value="ITPase-like"/>
    <property type="match status" value="1"/>
</dbReference>
<feature type="chain" id="PRO_0000178272" description="dITP/XTP pyrophosphatase">
    <location>
        <begin position="1"/>
        <end position="197"/>
    </location>
</feature>
<feature type="active site" description="Proton acceptor" evidence="1">
    <location>
        <position position="69"/>
    </location>
</feature>
<feature type="binding site" evidence="1">
    <location>
        <begin position="8"/>
        <end position="13"/>
    </location>
    <ligand>
        <name>substrate</name>
    </ligand>
</feature>
<feature type="binding site" evidence="1">
    <location>
        <position position="40"/>
    </location>
    <ligand>
        <name>Mg(2+)</name>
        <dbReference type="ChEBI" id="CHEBI:18420"/>
    </ligand>
</feature>
<feature type="binding site" evidence="1">
    <location>
        <position position="69"/>
    </location>
    <ligand>
        <name>Mg(2+)</name>
        <dbReference type="ChEBI" id="CHEBI:18420"/>
    </ligand>
</feature>
<feature type="binding site" evidence="1">
    <location>
        <position position="70"/>
    </location>
    <ligand>
        <name>substrate</name>
    </ligand>
</feature>
<feature type="binding site" evidence="1">
    <location>
        <begin position="154"/>
        <end position="157"/>
    </location>
    <ligand>
        <name>substrate</name>
    </ligand>
</feature>
<feature type="binding site" evidence="1">
    <location>
        <position position="177"/>
    </location>
    <ligand>
        <name>substrate</name>
    </ligand>
</feature>
<feature type="binding site" evidence="1">
    <location>
        <begin position="182"/>
        <end position="183"/>
    </location>
    <ligand>
        <name>substrate</name>
    </ligand>
</feature>
<proteinExistence type="inferred from homology"/>
<evidence type="ECO:0000255" key="1">
    <source>
        <dbReference type="HAMAP-Rule" id="MF_01405"/>
    </source>
</evidence>
<protein>
    <recommendedName>
        <fullName evidence="1">dITP/XTP pyrophosphatase</fullName>
        <ecNumber evidence="1">3.6.1.66</ecNumber>
    </recommendedName>
    <alternativeName>
        <fullName evidence="1">Non-canonical purine NTP pyrophosphatase</fullName>
    </alternativeName>
    <alternativeName>
        <fullName evidence="1">Non-standard purine NTP pyrophosphatase</fullName>
    </alternativeName>
    <alternativeName>
        <fullName evidence="1">Nucleoside-triphosphate diphosphatase</fullName>
    </alternativeName>
    <alternativeName>
        <fullName evidence="1">Nucleoside-triphosphate pyrophosphatase</fullName>
        <shortName evidence="1">NTPase</shortName>
    </alternativeName>
</protein>
<comment type="function">
    <text evidence="1">Pyrophosphatase that catalyzes the hydrolysis of nucleoside triphosphates to their monophosphate derivatives, with a high preference for the non-canonical purine nucleotides XTP (xanthosine triphosphate), dITP (deoxyinosine triphosphate) and ITP. Seems to function as a house-cleaning enzyme that removes non-canonical purine nucleotides from the nucleotide pool, thus preventing their incorporation into DNA/RNA and avoiding chromosomal lesions.</text>
</comment>
<comment type="catalytic activity">
    <reaction evidence="1">
        <text>XTP + H2O = XMP + diphosphate + H(+)</text>
        <dbReference type="Rhea" id="RHEA:28610"/>
        <dbReference type="ChEBI" id="CHEBI:15377"/>
        <dbReference type="ChEBI" id="CHEBI:15378"/>
        <dbReference type="ChEBI" id="CHEBI:33019"/>
        <dbReference type="ChEBI" id="CHEBI:57464"/>
        <dbReference type="ChEBI" id="CHEBI:61314"/>
        <dbReference type="EC" id="3.6.1.66"/>
    </reaction>
</comment>
<comment type="catalytic activity">
    <reaction evidence="1">
        <text>dITP + H2O = dIMP + diphosphate + H(+)</text>
        <dbReference type="Rhea" id="RHEA:28342"/>
        <dbReference type="ChEBI" id="CHEBI:15377"/>
        <dbReference type="ChEBI" id="CHEBI:15378"/>
        <dbReference type="ChEBI" id="CHEBI:33019"/>
        <dbReference type="ChEBI" id="CHEBI:61194"/>
        <dbReference type="ChEBI" id="CHEBI:61382"/>
        <dbReference type="EC" id="3.6.1.66"/>
    </reaction>
</comment>
<comment type="catalytic activity">
    <reaction evidence="1">
        <text>ITP + H2O = IMP + diphosphate + H(+)</text>
        <dbReference type="Rhea" id="RHEA:29399"/>
        <dbReference type="ChEBI" id="CHEBI:15377"/>
        <dbReference type="ChEBI" id="CHEBI:15378"/>
        <dbReference type="ChEBI" id="CHEBI:33019"/>
        <dbReference type="ChEBI" id="CHEBI:58053"/>
        <dbReference type="ChEBI" id="CHEBI:61402"/>
        <dbReference type="EC" id="3.6.1.66"/>
    </reaction>
</comment>
<comment type="cofactor">
    <cofactor evidence="1">
        <name>Mg(2+)</name>
        <dbReference type="ChEBI" id="CHEBI:18420"/>
    </cofactor>
    <text evidence="1">Binds 1 Mg(2+) ion per subunit.</text>
</comment>
<comment type="subunit">
    <text evidence="1">Homodimer.</text>
</comment>
<comment type="similarity">
    <text evidence="1">Belongs to the HAM1 NTPase family.</text>
</comment>
<accession>Q666N1</accession>
<keyword id="KW-0378">Hydrolase</keyword>
<keyword id="KW-0460">Magnesium</keyword>
<keyword id="KW-0479">Metal-binding</keyword>
<keyword id="KW-0546">Nucleotide metabolism</keyword>
<keyword id="KW-0547">Nucleotide-binding</keyword>
<gene>
    <name type="ordered locus">YPTB3217</name>
</gene>
<sequence>MQKIVLATGNPGKVRELANLLADFGLDVVAQTELGVESAEETGLTFIENAILKARHAAQTTGLPAIADDSGLAVDALGGAPGIYSARYAGTDASDQENLEKLLAALQNVPEEKRGAQFHCVLVYMRHAEDPTPLVFHGQWPGVIAHQPAGAAGFGYDPIFYVPALGKTAAELTREEKHAVSHRGQALKLMLDALRDA</sequence>
<reference key="1">
    <citation type="journal article" date="2004" name="Proc. Natl. Acad. Sci. U.S.A.">
        <title>Insights into the evolution of Yersinia pestis through whole-genome comparison with Yersinia pseudotuberculosis.</title>
        <authorList>
            <person name="Chain P.S.G."/>
            <person name="Carniel E."/>
            <person name="Larimer F.W."/>
            <person name="Lamerdin J."/>
            <person name="Stoutland P.O."/>
            <person name="Regala W.M."/>
            <person name="Georgescu A.M."/>
            <person name="Vergez L.M."/>
            <person name="Land M.L."/>
            <person name="Motin V.L."/>
            <person name="Brubaker R.R."/>
            <person name="Fowler J."/>
            <person name="Hinnebusch J."/>
            <person name="Marceau M."/>
            <person name="Medigue C."/>
            <person name="Simonet M."/>
            <person name="Chenal-Francisque V."/>
            <person name="Souza B."/>
            <person name="Dacheux D."/>
            <person name="Elliott J.M."/>
            <person name="Derbise A."/>
            <person name="Hauser L.J."/>
            <person name="Garcia E."/>
        </authorList>
    </citation>
    <scope>NUCLEOTIDE SEQUENCE [LARGE SCALE GENOMIC DNA]</scope>
    <source>
        <strain>IP32953</strain>
    </source>
</reference>
<name>IXTPA_YERPS</name>
<organism>
    <name type="scientific">Yersinia pseudotuberculosis serotype I (strain IP32953)</name>
    <dbReference type="NCBI Taxonomy" id="273123"/>
    <lineage>
        <taxon>Bacteria</taxon>
        <taxon>Pseudomonadati</taxon>
        <taxon>Pseudomonadota</taxon>
        <taxon>Gammaproteobacteria</taxon>
        <taxon>Enterobacterales</taxon>
        <taxon>Yersiniaceae</taxon>
        <taxon>Yersinia</taxon>
    </lineage>
</organism>